<geneLocation type="mitochondrion"/>
<proteinExistence type="inferred from homology"/>
<keyword id="KW-0249">Electron transport</keyword>
<keyword id="KW-0349">Heme</keyword>
<keyword id="KW-0408">Iron</keyword>
<keyword id="KW-0472">Membrane</keyword>
<keyword id="KW-0479">Metal-binding</keyword>
<keyword id="KW-0496">Mitochondrion</keyword>
<keyword id="KW-0999">Mitochondrion inner membrane</keyword>
<keyword id="KW-0679">Respiratory chain</keyword>
<keyword id="KW-0812">Transmembrane</keyword>
<keyword id="KW-1133">Transmembrane helix</keyword>
<keyword id="KW-0813">Transport</keyword>
<keyword id="KW-0830">Ubiquinone</keyword>
<reference key="1">
    <citation type="submission" date="2000-04" db="EMBL/GenBank/DDBJ databases">
        <title>A mitochondrial sequence-based phylogenetic analysis of Parula wood-warblers.</title>
        <authorList>
            <person name="Lovette I.J."/>
            <person name="Bermingham E."/>
        </authorList>
    </citation>
    <scope>NUCLEOTIDE SEQUENCE [GENOMIC DNA]</scope>
    <source>
        <strain>Isolate STRI PA-PGT26458</strain>
        <strain>Isolate STRI PA-PGT26459</strain>
    </source>
</reference>
<accession>Q9MDF2</accession>
<evidence type="ECO:0000250" key="1"/>
<evidence type="ECO:0000250" key="2">
    <source>
        <dbReference type="UniProtKB" id="P00157"/>
    </source>
</evidence>
<evidence type="ECO:0000255" key="3">
    <source>
        <dbReference type="PROSITE-ProRule" id="PRU00967"/>
    </source>
</evidence>
<evidence type="ECO:0000255" key="4">
    <source>
        <dbReference type="PROSITE-ProRule" id="PRU00968"/>
    </source>
</evidence>
<organism>
    <name type="scientific">Oreothlypis gutturalis</name>
    <name type="common">Flame-throated warbler</name>
    <name type="synonym">Parula gutturalis</name>
    <dbReference type="NCBI Taxonomy" id="125948"/>
    <lineage>
        <taxon>Eukaryota</taxon>
        <taxon>Metazoa</taxon>
        <taxon>Chordata</taxon>
        <taxon>Craniata</taxon>
        <taxon>Vertebrata</taxon>
        <taxon>Euteleostomi</taxon>
        <taxon>Archelosauria</taxon>
        <taxon>Archosauria</taxon>
        <taxon>Dinosauria</taxon>
        <taxon>Saurischia</taxon>
        <taxon>Theropoda</taxon>
        <taxon>Coelurosauria</taxon>
        <taxon>Aves</taxon>
        <taxon>Neognathae</taxon>
        <taxon>Neoaves</taxon>
        <taxon>Telluraves</taxon>
        <taxon>Australaves</taxon>
        <taxon>Passeriformes</taxon>
        <taxon>Passeroidea</taxon>
        <taxon>Parulidae</taxon>
        <taxon>Oreothlypis</taxon>
    </lineage>
</organism>
<feature type="chain" id="PRO_0000061349" description="Cytochrome b">
    <location>
        <begin position="1"/>
        <end position="380"/>
    </location>
</feature>
<feature type="transmembrane region" description="Helical" evidence="2">
    <location>
        <begin position="34"/>
        <end position="54"/>
    </location>
</feature>
<feature type="transmembrane region" description="Helical" evidence="2">
    <location>
        <begin position="78"/>
        <end position="99"/>
    </location>
</feature>
<feature type="transmembrane region" description="Helical" evidence="2">
    <location>
        <begin position="114"/>
        <end position="134"/>
    </location>
</feature>
<feature type="transmembrane region" description="Helical" evidence="2">
    <location>
        <begin position="179"/>
        <end position="199"/>
    </location>
</feature>
<feature type="transmembrane region" description="Helical" evidence="2">
    <location>
        <begin position="227"/>
        <end position="247"/>
    </location>
</feature>
<feature type="transmembrane region" description="Helical" evidence="2">
    <location>
        <begin position="289"/>
        <end position="309"/>
    </location>
</feature>
<feature type="transmembrane region" description="Helical" evidence="2">
    <location>
        <begin position="321"/>
        <end position="341"/>
    </location>
</feature>
<feature type="transmembrane region" description="Helical" evidence="2">
    <location>
        <begin position="348"/>
        <end position="368"/>
    </location>
</feature>
<feature type="binding site" description="axial binding residue" evidence="2">
    <location>
        <position position="84"/>
    </location>
    <ligand>
        <name>heme b</name>
        <dbReference type="ChEBI" id="CHEBI:60344"/>
        <label>b562</label>
    </ligand>
    <ligandPart>
        <name>Fe</name>
        <dbReference type="ChEBI" id="CHEBI:18248"/>
    </ligandPart>
</feature>
<feature type="binding site" description="axial binding residue" evidence="2">
    <location>
        <position position="98"/>
    </location>
    <ligand>
        <name>heme b</name>
        <dbReference type="ChEBI" id="CHEBI:60344"/>
        <label>b566</label>
    </ligand>
    <ligandPart>
        <name>Fe</name>
        <dbReference type="ChEBI" id="CHEBI:18248"/>
    </ligandPart>
</feature>
<feature type="binding site" description="axial binding residue" evidence="2">
    <location>
        <position position="183"/>
    </location>
    <ligand>
        <name>heme b</name>
        <dbReference type="ChEBI" id="CHEBI:60344"/>
        <label>b562</label>
    </ligand>
    <ligandPart>
        <name>Fe</name>
        <dbReference type="ChEBI" id="CHEBI:18248"/>
    </ligandPart>
</feature>
<feature type="binding site" description="axial binding residue" evidence="2">
    <location>
        <position position="197"/>
    </location>
    <ligand>
        <name>heme b</name>
        <dbReference type="ChEBI" id="CHEBI:60344"/>
        <label>b566</label>
    </ligand>
    <ligandPart>
        <name>Fe</name>
        <dbReference type="ChEBI" id="CHEBI:18248"/>
    </ligandPart>
</feature>
<feature type="binding site" evidence="2">
    <location>
        <position position="202"/>
    </location>
    <ligand>
        <name>a ubiquinone</name>
        <dbReference type="ChEBI" id="CHEBI:16389"/>
    </ligand>
</feature>
<sequence length="380" mass="42449">MALNLRKNHQILKIINDALIDLPAPSNISTWWNFGSLLGICLITQIVTGLLLAMHYTADTNLAFSSVAHMCRDVQFGWLIRNLHANGASFFFICIYLHIGRGLYYGSYLNKETWNVGVILLLTLMATAFVGYVLPWGQMSFWGATVITNLFSAIPYIGQTLVEWAWGGFSVDNPTLTRFFALHFLLPFVIVGLTLVHLTFLHETGSNNPLGIPSDCDKIPFHPYYTIKDILGFVLMLSLLVSLALFSPNLLGDPENFTPANPLVTPPHIKPEWYFLFAYAILRSIPNKLGGVLALAASILVLFLTPLLHTSKLRSMTFRPLSQILFWTLVANVLILTWVGSQPVEHPFIIIGQLASFTYFTIILVLFPLAAALENKLLKL</sequence>
<comment type="function">
    <text evidence="2">Component of the ubiquinol-cytochrome c reductase complex (complex III or cytochrome b-c1 complex) that is part of the mitochondrial respiratory chain. The b-c1 complex mediates electron transfer from ubiquinol to cytochrome c. Contributes to the generation of a proton gradient across the mitochondrial membrane that is then used for ATP synthesis.</text>
</comment>
<comment type="cofactor">
    <cofactor evidence="2">
        <name>heme b</name>
        <dbReference type="ChEBI" id="CHEBI:60344"/>
    </cofactor>
    <text evidence="2">Binds 2 heme b groups non-covalently.</text>
</comment>
<comment type="subunit">
    <text evidence="2">The cytochrome bc1 complex contains 11 subunits: 3 respiratory subunits (MT-CYB, CYC1 and UQCRFS1), 2 core proteins (UQCRC1 and UQCRC2) and 6 low-molecular weight proteins (UQCRH/QCR6, UQCRB/QCR7, UQCRQ/QCR8, UQCR10/QCR9, UQCR11/QCR10 and a cleavage product of UQCRFS1). This cytochrome bc1 complex then forms a dimer.</text>
</comment>
<comment type="subcellular location">
    <subcellularLocation>
        <location evidence="2">Mitochondrion inner membrane</location>
        <topology evidence="2">Multi-pass membrane protein</topology>
    </subcellularLocation>
</comment>
<comment type="miscellaneous">
    <text evidence="1">Heme 1 (or BL or b562) is low-potential and absorbs at about 562 nm, and heme 2 (or BH or b566) is high-potential and absorbs at about 566 nm.</text>
</comment>
<comment type="similarity">
    <text evidence="3 4">Belongs to the cytochrome b family.</text>
</comment>
<comment type="caution">
    <text evidence="2">The full-length protein contains only eight transmembrane helices, not nine as predicted by bioinformatics tools.</text>
</comment>
<protein>
    <recommendedName>
        <fullName>Cytochrome b</fullName>
    </recommendedName>
    <alternativeName>
        <fullName>Complex III subunit 3</fullName>
    </alternativeName>
    <alternativeName>
        <fullName>Complex III subunit III</fullName>
    </alternativeName>
    <alternativeName>
        <fullName>Cytochrome b-c1 complex subunit 3</fullName>
    </alternativeName>
    <alternativeName>
        <fullName>Ubiquinol-cytochrome-c reductase complex cytochrome b subunit</fullName>
    </alternativeName>
</protein>
<dbReference type="EMBL" id="AF256507">
    <property type="protein sequence ID" value="AAF71563.1"/>
    <property type="molecule type" value="Genomic_DNA"/>
</dbReference>
<dbReference type="EMBL" id="AF256508">
    <property type="protein sequence ID" value="AAF71564.1"/>
    <property type="molecule type" value="Genomic_DNA"/>
</dbReference>
<dbReference type="SMR" id="Q9MDF2"/>
<dbReference type="GO" id="GO:0005743">
    <property type="term" value="C:mitochondrial inner membrane"/>
    <property type="evidence" value="ECO:0007669"/>
    <property type="project" value="UniProtKB-SubCell"/>
</dbReference>
<dbReference type="GO" id="GO:0045275">
    <property type="term" value="C:respiratory chain complex III"/>
    <property type="evidence" value="ECO:0007669"/>
    <property type="project" value="InterPro"/>
</dbReference>
<dbReference type="GO" id="GO:0046872">
    <property type="term" value="F:metal ion binding"/>
    <property type="evidence" value="ECO:0007669"/>
    <property type="project" value="UniProtKB-KW"/>
</dbReference>
<dbReference type="GO" id="GO:0008121">
    <property type="term" value="F:ubiquinol-cytochrome-c reductase activity"/>
    <property type="evidence" value="ECO:0007669"/>
    <property type="project" value="InterPro"/>
</dbReference>
<dbReference type="GO" id="GO:0006122">
    <property type="term" value="P:mitochondrial electron transport, ubiquinol to cytochrome c"/>
    <property type="evidence" value="ECO:0007669"/>
    <property type="project" value="TreeGrafter"/>
</dbReference>
<dbReference type="CDD" id="cd00290">
    <property type="entry name" value="cytochrome_b_C"/>
    <property type="match status" value="1"/>
</dbReference>
<dbReference type="CDD" id="cd00284">
    <property type="entry name" value="Cytochrome_b_N"/>
    <property type="match status" value="1"/>
</dbReference>
<dbReference type="FunFam" id="1.20.810.10:FF:000002">
    <property type="entry name" value="Cytochrome b"/>
    <property type="match status" value="1"/>
</dbReference>
<dbReference type="Gene3D" id="1.20.810.10">
    <property type="entry name" value="Cytochrome Bc1 Complex, Chain C"/>
    <property type="match status" value="1"/>
</dbReference>
<dbReference type="InterPro" id="IPR005798">
    <property type="entry name" value="Cyt_b/b6_C"/>
</dbReference>
<dbReference type="InterPro" id="IPR036150">
    <property type="entry name" value="Cyt_b/b6_C_sf"/>
</dbReference>
<dbReference type="InterPro" id="IPR005797">
    <property type="entry name" value="Cyt_b/b6_N"/>
</dbReference>
<dbReference type="InterPro" id="IPR027387">
    <property type="entry name" value="Cytb/b6-like_sf"/>
</dbReference>
<dbReference type="InterPro" id="IPR030689">
    <property type="entry name" value="Cytochrome_b"/>
</dbReference>
<dbReference type="InterPro" id="IPR048260">
    <property type="entry name" value="Cytochrome_b_C_euk/bac"/>
</dbReference>
<dbReference type="InterPro" id="IPR048259">
    <property type="entry name" value="Cytochrome_b_N_euk/bac"/>
</dbReference>
<dbReference type="InterPro" id="IPR016174">
    <property type="entry name" value="Di-haem_cyt_TM"/>
</dbReference>
<dbReference type="PANTHER" id="PTHR19271">
    <property type="entry name" value="CYTOCHROME B"/>
    <property type="match status" value="1"/>
</dbReference>
<dbReference type="PANTHER" id="PTHR19271:SF16">
    <property type="entry name" value="CYTOCHROME B"/>
    <property type="match status" value="1"/>
</dbReference>
<dbReference type="Pfam" id="PF00032">
    <property type="entry name" value="Cytochrom_B_C"/>
    <property type="match status" value="1"/>
</dbReference>
<dbReference type="Pfam" id="PF00033">
    <property type="entry name" value="Cytochrome_B"/>
    <property type="match status" value="1"/>
</dbReference>
<dbReference type="PIRSF" id="PIRSF038885">
    <property type="entry name" value="COB"/>
    <property type="match status" value="1"/>
</dbReference>
<dbReference type="SUPFAM" id="SSF81648">
    <property type="entry name" value="a domain/subunit of cytochrome bc1 complex (Ubiquinol-cytochrome c reductase)"/>
    <property type="match status" value="1"/>
</dbReference>
<dbReference type="SUPFAM" id="SSF81342">
    <property type="entry name" value="Transmembrane di-heme cytochromes"/>
    <property type="match status" value="1"/>
</dbReference>
<dbReference type="PROSITE" id="PS51003">
    <property type="entry name" value="CYTB_CTER"/>
    <property type="match status" value="1"/>
</dbReference>
<dbReference type="PROSITE" id="PS51002">
    <property type="entry name" value="CYTB_NTER"/>
    <property type="match status" value="1"/>
</dbReference>
<name>CYB_OREGU</name>
<gene>
    <name type="primary">MT-CYB</name>
    <name type="synonym">COB</name>
    <name type="synonym">CYTB</name>
    <name type="synonym">MTCYB</name>
</gene>